<reference key="1">
    <citation type="journal article" date="2009" name="BMC Genomics">
        <title>Pseudogene accumulation in the evolutionary histories of Salmonella enterica serovars Paratyphi A and Typhi.</title>
        <authorList>
            <person name="Holt K.E."/>
            <person name="Thomson N.R."/>
            <person name="Wain J."/>
            <person name="Langridge G.C."/>
            <person name="Hasan R."/>
            <person name="Bhutta Z.A."/>
            <person name="Quail M.A."/>
            <person name="Norbertczak H."/>
            <person name="Walker D."/>
            <person name="Simmonds M."/>
            <person name="White B."/>
            <person name="Bason N."/>
            <person name="Mungall K."/>
            <person name="Dougan G."/>
            <person name="Parkhill J."/>
        </authorList>
    </citation>
    <scope>NUCLEOTIDE SEQUENCE [LARGE SCALE GENOMIC DNA]</scope>
    <source>
        <strain>AKU_12601</strain>
    </source>
</reference>
<dbReference type="EC" id="2.1.-.-" evidence="1"/>
<dbReference type="EMBL" id="FM200053">
    <property type="protein sequence ID" value="CAR59769.1"/>
    <property type="molecule type" value="Genomic_DNA"/>
</dbReference>
<dbReference type="RefSeq" id="WP_000100069.1">
    <property type="nucleotide sequence ID" value="NC_011147.1"/>
</dbReference>
<dbReference type="KEGG" id="sek:SSPA1583"/>
<dbReference type="HOGENOM" id="CLU_036182_2_0_6"/>
<dbReference type="UniPathway" id="UPA00637"/>
<dbReference type="Proteomes" id="UP000001869">
    <property type="component" value="Chromosome"/>
</dbReference>
<dbReference type="GO" id="GO:0005886">
    <property type="term" value="C:plasma membrane"/>
    <property type="evidence" value="ECO:0007669"/>
    <property type="project" value="UniProtKB-SubCell"/>
</dbReference>
<dbReference type="GO" id="GO:0016747">
    <property type="term" value="F:acyltransferase activity, transferring groups other than amino-acyl groups"/>
    <property type="evidence" value="ECO:0007669"/>
    <property type="project" value="InterPro"/>
</dbReference>
<dbReference type="GO" id="GO:0016741">
    <property type="term" value="F:transferase activity, transferring one-carbon groups"/>
    <property type="evidence" value="ECO:0007669"/>
    <property type="project" value="UniProtKB-UniRule"/>
</dbReference>
<dbReference type="GO" id="GO:0009250">
    <property type="term" value="P:glucan biosynthetic process"/>
    <property type="evidence" value="ECO:0007669"/>
    <property type="project" value="UniProtKB-UniRule"/>
</dbReference>
<dbReference type="HAMAP" id="MF_01066">
    <property type="entry name" value="MdoC_OpgC"/>
    <property type="match status" value="1"/>
</dbReference>
<dbReference type="InterPro" id="IPR002656">
    <property type="entry name" value="Acyl_transf_3_dom"/>
</dbReference>
<dbReference type="InterPro" id="IPR050623">
    <property type="entry name" value="Glucan_succinyl_AcylTrfase"/>
</dbReference>
<dbReference type="InterPro" id="IPR023723">
    <property type="entry name" value="Glucans_biosynth_C"/>
</dbReference>
<dbReference type="NCBIfam" id="NF003014">
    <property type="entry name" value="PRK03854.1"/>
    <property type="match status" value="1"/>
</dbReference>
<dbReference type="PANTHER" id="PTHR36927">
    <property type="entry name" value="BLR4337 PROTEIN"/>
    <property type="match status" value="1"/>
</dbReference>
<dbReference type="PANTHER" id="PTHR36927:SF3">
    <property type="entry name" value="GLUCANS BIOSYNTHESIS PROTEIN C"/>
    <property type="match status" value="1"/>
</dbReference>
<dbReference type="Pfam" id="PF01757">
    <property type="entry name" value="Acyl_transf_3"/>
    <property type="match status" value="1"/>
</dbReference>
<accession>B5BBE0</accession>
<sequence length="384" mass="44322">MSSVPAPREYFLDSIRAWLMLLGIPFHISLIYSTHSWHVNSATPSWWLTLFNDFIHAFRMQVFFVISGYFSYMLFLRYPLKRWWKVRVERVGIPMLTAIPLLTLPQFILLQYVKEKTENWPTLSAYEKYNTLAWELISHLWFLLVLVILTTVSIGIFTWFQKRQETSKPRPAAISLARLSLIFFLLGMAYAAIRRIIFIVYPAILSDGMFNFIVMQTLFYVPFFILGALAFIHPDLKARFTTPSRGCTLGAAVAFIAYLLNQRYGSGDAWMYETESVITMVMGLWMVNVVFSLGHRLLNFQSARVTYFVNASLFIYLVHHPLTLFFGAYITPHISSNLIGFLCGLIFVMGIALILYEIHLRIPLLKFLFSGKPPVKQESRAAIG</sequence>
<keyword id="KW-0012">Acyltransferase</keyword>
<keyword id="KW-1003">Cell membrane</keyword>
<keyword id="KW-0472">Membrane</keyword>
<keyword id="KW-0808">Transferase</keyword>
<keyword id="KW-0812">Transmembrane</keyword>
<keyword id="KW-1133">Transmembrane helix</keyword>
<gene>
    <name evidence="1" type="primary">mdoC</name>
    <name evidence="1" type="synonym">opgC</name>
    <name type="ordered locus">SSPA1583</name>
</gene>
<organism>
    <name type="scientific">Salmonella paratyphi A (strain AKU_12601)</name>
    <dbReference type="NCBI Taxonomy" id="554290"/>
    <lineage>
        <taxon>Bacteria</taxon>
        <taxon>Pseudomonadati</taxon>
        <taxon>Pseudomonadota</taxon>
        <taxon>Gammaproteobacteria</taxon>
        <taxon>Enterobacterales</taxon>
        <taxon>Enterobacteriaceae</taxon>
        <taxon>Salmonella</taxon>
    </lineage>
</organism>
<feature type="chain" id="PRO_1000136576" description="Glucans biosynthesis protein C">
    <location>
        <begin position="1"/>
        <end position="384"/>
    </location>
</feature>
<feature type="transmembrane region" description="Helical" evidence="1">
    <location>
        <begin position="17"/>
        <end position="37"/>
    </location>
</feature>
<feature type="transmembrane region" description="Helical" evidence="1">
    <location>
        <begin position="54"/>
        <end position="74"/>
    </location>
</feature>
<feature type="transmembrane region" description="Helical" evidence="1">
    <location>
        <begin position="91"/>
        <end position="111"/>
    </location>
</feature>
<feature type="transmembrane region" description="Helical" evidence="1">
    <location>
        <begin position="140"/>
        <end position="160"/>
    </location>
</feature>
<feature type="transmembrane region" description="Helical" evidence="1">
    <location>
        <begin position="173"/>
        <end position="193"/>
    </location>
</feature>
<feature type="transmembrane region" description="Helical" evidence="1">
    <location>
        <begin position="212"/>
        <end position="232"/>
    </location>
</feature>
<feature type="transmembrane region" description="Helical" evidence="1">
    <location>
        <begin position="240"/>
        <end position="260"/>
    </location>
</feature>
<feature type="transmembrane region" description="Helical" evidence="1">
    <location>
        <begin position="274"/>
        <end position="294"/>
    </location>
</feature>
<feature type="transmembrane region" description="Helical" evidence="1">
    <location>
        <begin position="311"/>
        <end position="331"/>
    </location>
</feature>
<feature type="transmembrane region" description="Helical" evidence="1">
    <location>
        <begin position="338"/>
        <end position="358"/>
    </location>
</feature>
<protein>
    <recommendedName>
        <fullName evidence="1">Glucans biosynthesis protein C</fullName>
        <ecNumber evidence="1">2.1.-.-</ecNumber>
    </recommendedName>
</protein>
<proteinExistence type="inferred from homology"/>
<name>OPGC_SALPK</name>
<comment type="function">
    <text evidence="1">Necessary for the succinyl substitution of periplasmic glucans. Could catalyze the transfer of succinyl residues from the cytoplasmic side of the membrane to the nascent glucan backbones on the periplasmic side of the membrane.</text>
</comment>
<comment type="pathway">
    <text evidence="1">Glycan metabolism; osmoregulated periplasmic glucan (OPG) biosynthesis.</text>
</comment>
<comment type="subcellular location">
    <subcellularLocation>
        <location evidence="1">Cell membrane</location>
        <topology evidence="1">Multi-pass membrane protein</topology>
    </subcellularLocation>
</comment>
<comment type="similarity">
    <text evidence="1">Belongs to the acyltransferase 3 family. OpgC subfamily.</text>
</comment>
<evidence type="ECO:0000255" key="1">
    <source>
        <dbReference type="HAMAP-Rule" id="MF_01066"/>
    </source>
</evidence>